<accession>A9N513</accession>
<comment type="function">
    <text evidence="1">Catalyzes the isomerization of L-xylulose-5-phosphate to L-ribulose-5-phosphate. Is involved in the anaerobic L-ascorbate utilization.</text>
</comment>
<comment type="catalytic activity">
    <reaction evidence="1">
        <text>L-ribulose 5-phosphate = L-xylulose 5-phosphate</text>
        <dbReference type="Rhea" id="RHEA:18497"/>
        <dbReference type="ChEBI" id="CHEBI:57829"/>
        <dbReference type="ChEBI" id="CHEBI:58226"/>
        <dbReference type="EC" id="5.1.3.22"/>
    </reaction>
</comment>
<comment type="pathway">
    <text evidence="1">Cofactor degradation; L-ascorbate degradation; D-xylulose 5-phosphate from L-ascorbate: step 3/4.</text>
</comment>
<comment type="induction">
    <text evidence="1">Induced by L-ascorbate. Repressed by UlaR.</text>
</comment>
<comment type="similarity">
    <text evidence="1">Belongs to the L-ribulose-5-phosphate 3-epimerase family.</text>
</comment>
<sequence>MLSKQIPLGIYEKALPAGECWLERLRLAKTLGFDFVEMSVDETDARLARLDWSREQRLALVSAVAETGVRVPSMCLSAHRRFPLGSEDDAVRAQGLEIMRKAIQFAQDVGIRVIQLAGYDVYYQQANDETRCRFRDGLKESVDMASRAQVTLAMEIMDYPLMNSISKALGYAHYLNNPWFQLYPDIGNLSAWDNDVQMELQAGIGHIVAVHVKDTKPGVFKNVPFGEGVVDFERCFETLKQSGYCGPYLIEMWSETAENPAAEVAKARDWVKARMASAGLVEAA</sequence>
<protein>
    <recommendedName>
        <fullName evidence="1">L-ribulose-5-phosphate 3-epimerase UlaE</fullName>
        <ecNumber evidence="1">5.1.3.22</ecNumber>
    </recommendedName>
    <alternativeName>
        <fullName evidence="1">L-ascorbate utilization protein E</fullName>
    </alternativeName>
    <alternativeName>
        <fullName evidence="1">L-xylulose-5-phosphate 3-epimerase</fullName>
    </alternativeName>
</protein>
<keyword id="KW-0413">Isomerase</keyword>
<organism>
    <name type="scientific">Salmonella paratyphi B (strain ATCC BAA-1250 / SPB7)</name>
    <dbReference type="NCBI Taxonomy" id="1016998"/>
    <lineage>
        <taxon>Bacteria</taxon>
        <taxon>Pseudomonadati</taxon>
        <taxon>Pseudomonadota</taxon>
        <taxon>Gammaproteobacteria</taxon>
        <taxon>Enterobacterales</taxon>
        <taxon>Enterobacteriaceae</taxon>
        <taxon>Salmonella</taxon>
    </lineage>
</organism>
<evidence type="ECO:0000255" key="1">
    <source>
        <dbReference type="HAMAP-Rule" id="MF_01951"/>
    </source>
</evidence>
<proteinExistence type="inferred from homology"/>
<name>ULAE_SALPB</name>
<dbReference type="EC" id="5.1.3.22" evidence="1"/>
<dbReference type="EMBL" id="CP000886">
    <property type="protein sequence ID" value="ABX70790.1"/>
    <property type="molecule type" value="Genomic_DNA"/>
</dbReference>
<dbReference type="RefSeq" id="WP_000949530.1">
    <property type="nucleotide sequence ID" value="NC_010102.1"/>
</dbReference>
<dbReference type="SMR" id="A9N513"/>
<dbReference type="KEGG" id="spq:SPAB_05521"/>
<dbReference type="PATRIC" id="fig|1016998.12.peg.5174"/>
<dbReference type="HOGENOM" id="CLU_082738_0_0_6"/>
<dbReference type="BioCyc" id="SENT1016998:SPAB_RS22545-MONOMER"/>
<dbReference type="UniPathway" id="UPA00263">
    <property type="reaction ID" value="UER00379"/>
</dbReference>
<dbReference type="Proteomes" id="UP000008556">
    <property type="component" value="Chromosome"/>
</dbReference>
<dbReference type="GO" id="GO:0016861">
    <property type="term" value="F:intramolecular oxidoreductase activity, interconverting aldoses and ketoses"/>
    <property type="evidence" value="ECO:0007669"/>
    <property type="project" value="InterPro"/>
</dbReference>
<dbReference type="GO" id="GO:0034015">
    <property type="term" value="F:L-ribulose-5-phosphate 3-epimerase activity"/>
    <property type="evidence" value="ECO:0007669"/>
    <property type="project" value="UniProtKB-UniRule"/>
</dbReference>
<dbReference type="GO" id="GO:0019854">
    <property type="term" value="P:L-ascorbic acid catabolic process"/>
    <property type="evidence" value="ECO:0007669"/>
    <property type="project" value="UniProtKB-UniRule"/>
</dbReference>
<dbReference type="FunFam" id="3.20.20.150:FF:000003">
    <property type="entry name" value="L-ribulose-5-phosphate 3-epimerase UlaE"/>
    <property type="match status" value="1"/>
</dbReference>
<dbReference type="Gene3D" id="3.20.20.150">
    <property type="entry name" value="Divalent-metal-dependent TIM barrel enzymes"/>
    <property type="match status" value="1"/>
</dbReference>
<dbReference type="HAMAP" id="MF_01951">
    <property type="entry name" value="UlaE"/>
    <property type="match status" value="1"/>
</dbReference>
<dbReference type="InterPro" id="IPR004560">
    <property type="entry name" value="L-Ru-5P_3-Epase"/>
</dbReference>
<dbReference type="InterPro" id="IPR023492">
    <property type="entry name" value="L-Ru-5P_3-Epase_Enterobacteria"/>
</dbReference>
<dbReference type="InterPro" id="IPR050417">
    <property type="entry name" value="Sugar_Epim/Isomerase"/>
</dbReference>
<dbReference type="InterPro" id="IPR036237">
    <property type="entry name" value="Xyl_isomerase-like_sf"/>
</dbReference>
<dbReference type="InterPro" id="IPR013022">
    <property type="entry name" value="Xyl_isomerase-like_TIM-brl"/>
</dbReference>
<dbReference type="NCBIfam" id="TIGR00542">
    <property type="entry name" value="hxl6Piso_put"/>
    <property type="match status" value="1"/>
</dbReference>
<dbReference type="NCBIfam" id="NF009688">
    <property type="entry name" value="PRK13209.1"/>
    <property type="match status" value="1"/>
</dbReference>
<dbReference type="NCBIfam" id="NF009689">
    <property type="entry name" value="PRK13210.1"/>
    <property type="match status" value="1"/>
</dbReference>
<dbReference type="PANTHER" id="PTHR43489">
    <property type="entry name" value="ISOMERASE"/>
    <property type="match status" value="1"/>
</dbReference>
<dbReference type="PANTHER" id="PTHR43489:SF8">
    <property type="entry name" value="L-RIBULOSE-5-PHOSPHATE 3-EPIMERASE ULAE"/>
    <property type="match status" value="1"/>
</dbReference>
<dbReference type="Pfam" id="PF01261">
    <property type="entry name" value="AP_endonuc_2"/>
    <property type="match status" value="1"/>
</dbReference>
<dbReference type="SUPFAM" id="SSF51658">
    <property type="entry name" value="Xylose isomerase-like"/>
    <property type="match status" value="1"/>
</dbReference>
<feature type="chain" id="PRO_1000088484" description="L-ribulose-5-phosphate 3-epimerase UlaE">
    <location>
        <begin position="1"/>
        <end position="284"/>
    </location>
</feature>
<gene>
    <name evidence="1" type="primary">ulaE</name>
    <name type="ordered locus">SPAB_05521</name>
</gene>
<reference key="1">
    <citation type="submission" date="2007-11" db="EMBL/GenBank/DDBJ databases">
        <authorList>
            <consortium name="The Salmonella enterica serovar Paratyphi B Genome Sequencing Project"/>
            <person name="McClelland M."/>
            <person name="Sanderson E.K."/>
            <person name="Porwollik S."/>
            <person name="Spieth J."/>
            <person name="Clifton W.S."/>
            <person name="Fulton R."/>
            <person name="Cordes M."/>
            <person name="Wollam A."/>
            <person name="Shah N."/>
            <person name="Pepin K."/>
            <person name="Bhonagiri V."/>
            <person name="Nash W."/>
            <person name="Johnson M."/>
            <person name="Thiruvilangam P."/>
            <person name="Wilson R."/>
        </authorList>
    </citation>
    <scope>NUCLEOTIDE SEQUENCE [LARGE SCALE GENOMIC DNA]</scope>
    <source>
        <strain>ATCC BAA-1250 / SPB7</strain>
    </source>
</reference>